<accession>A6WWG0</accession>
<comment type="function">
    <text evidence="1">Converts heme B (protoheme IX) to heme O by substitution of the vinyl group on carbon 2 of heme B porphyrin ring with a hydroxyethyl farnesyl side group.</text>
</comment>
<comment type="catalytic activity">
    <reaction evidence="1">
        <text>heme b + (2E,6E)-farnesyl diphosphate + H2O = Fe(II)-heme o + diphosphate</text>
        <dbReference type="Rhea" id="RHEA:28070"/>
        <dbReference type="ChEBI" id="CHEBI:15377"/>
        <dbReference type="ChEBI" id="CHEBI:33019"/>
        <dbReference type="ChEBI" id="CHEBI:60344"/>
        <dbReference type="ChEBI" id="CHEBI:60530"/>
        <dbReference type="ChEBI" id="CHEBI:175763"/>
        <dbReference type="EC" id="2.5.1.141"/>
    </reaction>
</comment>
<comment type="pathway">
    <text evidence="1">Porphyrin-containing compound metabolism; heme O biosynthesis; heme O from protoheme: step 1/1.</text>
</comment>
<comment type="subcellular location">
    <subcellularLocation>
        <location evidence="1">Cell inner membrane</location>
        <topology evidence="1">Multi-pass membrane protein</topology>
    </subcellularLocation>
</comment>
<comment type="miscellaneous">
    <text evidence="1">Carbon 2 of the heme B porphyrin ring is defined according to the Fischer nomenclature.</text>
</comment>
<comment type="similarity">
    <text evidence="1">Belongs to the UbiA prenyltransferase family. Protoheme IX farnesyltransferase subfamily.</text>
</comment>
<comment type="sequence caution" evidence="2">
    <conflict type="erroneous initiation">
        <sequence resource="EMBL-CDS" id="ABS13314"/>
    </conflict>
</comment>
<proteinExistence type="inferred from homology"/>
<evidence type="ECO:0000255" key="1">
    <source>
        <dbReference type="HAMAP-Rule" id="MF_00154"/>
    </source>
</evidence>
<evidence type="ECO:0000305" key="2"/>
<gene>
    <name evidence="1" type="primary">ctaB</name>
    <name type="ordered locus">Oant_0583</name>
</gene>
<sequence>MEKNAGTDDALALSEATARDYLVLLKPRVMSLVVFTGLVGLVVAPGHMNPVLAAISILCVAVGAGASGALNMWYDADIDAVMKRTRNRPIPAGIIAPNQVLAFGLTLSAFSVVTLGLMVNWLSAALLAFTIFFYAVVYTMWLKRSTPQNIVIGGAAGAFPPMIGWAAATGEITWDSVVLFMIIFLWTPPHFWALSLFSANDYEAARIPMMPNVKGELSTRRQALFYSIIMAPVGVLPWVLGFAGPVYGAISTLLGLAFVYYAWRMWVAGSQPEMLAAARKLFRFSLLYLSGLFAVLLVEALVMKALIAFGGF</sequence>
<organism>
    <name type="scientific">Brucella anthropi (strain ATCC 49188 / DSM 6882 / CCUG 24695 / JCM 21032 / LMG 3331 / NBRC 15819 / NCTC 12168 / Alc 37)</name>
    <name type="common">Ochrobactrum anthropi</name>
    <dbReference type="NCBI Taxonomy" id="439375"/>
    <lineage>
        <taxon>Bacteria</taxon>
        <taxon>Pseudomonadati</taxon>
        <taxon>Pseudomonadota</taxon>
        <taxon>Alphaproteobacteria</taxon>
        <taxon>Hyphomicrobiales</taxon>
        <taxon>Brucellaceae</taxon>
        <taxon>Brucella/Ochrobactrum group</taxon>
        <taxon>Brucella</taxon>
    </lineage>
</organism>
<feature type="chain" id="PRO_0000327106" description="Protoheme IX farnesyltransferase">
    <location>
        <begin position="1"/>
        <end position="312"/>
    </location>
</feature>
<feature type="transmembrane region" description="Helical" evidence="1">
    <location>
        <begin position="29"/>
        <end position="49"/>
    </location>
</feature>
<feature type="transmembrane region" description="Helical" evidence="1">
    <location>
        <begin position="50"/>
        <end position="70"/>
    </location>
</feature>
<feature type="transmembrane region" description="Helical" evidence="1">
    <location>
        <begin position="90"/>
        <end position="110"/>
    </location>
</feature>
<feature type="transmembrane region" description="Helical" evidence="1">
    <location>
        <begin position="117"/>
        <end position="137"/>
    </location>
</feature>
<feature type="transmembrane region" description="Helical" evidence="1">
    <location>
        <begin position="150"/>
        <end position="170"/>
    </location>
</feature>
<feature type="transmembrane region" description="Helical" evidence="1">
    <location>
        <begin position="177"/>
        <end position="197"/>
    </location>
</feature>
<feature type="transmembrane region" description="Helical" evidence="1">
    <location>
        <begin position="223"/>
        <end position="243"/>
    </location>
</feature>
<feature type="transmembrane region" description="Helical" evidence="1">
    <location>
        <begin position="248"/>
        <end position="268"/>
    </location>
</feature>
<feature type="transmembrane region" description="Helical" evidence="1">
    <location>
        <begin position="292"/>
        <end position="312"/>
    </location>
</feature>
<reference key="1">
    <citation type="journal article" date="2011" name="J. Bacteriol.">
        <title>Genome of Ochrobactrum anthropi ATCC 49188 T, a versatile opportunistic pathogen and symbiont of several eukaryotic hosts.</title>
        <authorList>
            <person name="Chain P.S."/>
            <person name="Lang D.M."/>
            <person name="Comerci D.J."/>
            <person name="Malfatti S.A."/>
            <person name="Vergez L.M."/>
            <person name="Shin M."/>
            <person name="Ugalde R.A."/>
            <person name="Garcia E."/>
            <person name="Tolmasky M.E."/>
        </authorList>
    </citation>
    <scope>NUCLEOTIDE SEQUENCE [LARGE SCALE GENOMIC DNA]</scope>
    <source>
        <strain>ATCC 49188 / DSM 6882 / CCUG 24695 / JCM 21032 / LMG 3331 / NBRC 15819 / NCTC 12168 / Alc 37</strain>
    </source>
</reference>
<name>COXX_BRUA4</name>
<dbReference type="EC" id="2.5.1.141" evidence="1"/>
<dbReference type="EMBL" id="CP000758">
    <property type="protein sequence ID" value="ABS13314.1"/>
    <property type="status" value="ALT_INIT"/>
    <property type="molecule type" value="Genomic_DNA"/>
</dbReference>
<dbReference type="SMR" id="A6WWG0"/>
<dbReference type="STRING" id="439375.Oant_0583"/>
<dbReference type="KEGG" id="oan:Oant_0583"/>
<dbReference type="PATRIC" id="fig|439375.7.peg.623"/>
<dbReference type="eggNOG" id="COG0109">
    <property type="taxonomic scope" value="Bacteria"/>
</dbReference>
<dbReference type="HOGENOM" id="CLU_029631_0_2_5"/>
<dbReference type="UniPathway" id="UPA00834">
    <property type="reaction ID" value="UER00712"/>
</dbReference>
<dbReference type="Proteomes" id="UP000002301">
    <property type="component" value="Chromosome 1"/>
</dbReference>
<dbReference type="GO" id="GO:0005886">
    <property type="term" value="C:plasma membrane"/>
    <property type="evidence" value="ECO:0007669"/>
    <property type="project" value="UniProtKB-SubCell"/>
</dbReference>
<dbReference type="GO" id="GO:0008495">
    <property type="term" value="F:protoheme IX farnesyltransferase activity"/>
    <property type="evidence" value="ECO:0007669"/>
    <property type="project" value="UniProtKB-UniRule"/>
</dbReference>
<dbReference type="GO" id="GO:0048034">
    <property type="term" value="P:heme O biosynthetic process"/>
    <property type="evidence" value="ECO:0007669"/>
    <property type="project" value="UniProtKB-UniRule"/>
</dbReference>
<dbReference type="CDD" id="cd13957">
    <property type="entry name" value="PT_UbiA_Cox10"/>
    <property type="match status" value="1"/>
</dbReference>
<dbReference type="Gene3D" id="1.10.357.140">
    <property type="entry name" value="UbiA prenyltransferase"/>
    <property type="match status" value="1"/>
</dbReference>
<dbReference type="HAMAP" id="MF_00154">
    <property type="entry name" value="CyoE_CtaB"/>
    <property type="match status" value="1"/>
</dbReference>
<dbReference type="InterPro" id="IPR006369">
    <property type="entry name" value="Protohaem_IX_farnesylTrfase"/>
</dbReference>
<dbReference type="InterPro" id="IPR000537">
    <property type="entry name" value="UbiA_prenyltransferase"/>
</dbReference>
<dbReference type="InterPro" id="IPR030470">
    <property type="entry name" value="UbiA_prenylTrfase_CS"/>
</dbReference>
<dbReference type="InterPro" id="IPR044878">
    <property type="entry name" value="UbiA_sf"/>
</dbReference>
<dbReference type="NCBIfam" id="TIGR01473">
    <property type="entry name" value="cyoE_ctaB"/>
    <property type="match status" value="1"/>
</dbReference>
<dbReference type="NCBIfam" id="NF003349">
    <property type="entry name" value="PRK04375.1-2"/>
    <property type="match status" value="1"/>
</dbReference>
<dbReference type="PANTHER" id="PTHR43448:SF7">
    <property type="entry name" value="4-HYDROXYBENZOATE SOLANESYLTRANSFERASE"/>
    <property type="match status" value="1"/>
</dbReference>
<dbReference type="PANTHER" id="PTHR43448">
    <property type="entry name" value="PROTOHEME IX FARNESYLTRANSFERASE, MITOCHONDRIAL"/>
    <property type="match status" value="1"/>
</dbReference>
<dbReference type="Pfam" id="PF01040">
    <property type="entry name" value="UbiA"/>
    <property type="match status" value="1"/>
</dbReference>
<dbReference type="PROSITE" id="PS00943">
    <property type="entry name" value="UBIA"/>
    <property type="match status" value="1"/>
</dbReference>
<keyword id="KW-0997">Cell inner membrane</keyword>
<keyword id="KW-1003">Cell membrane</keyword>
<keyword id="KW-0350">Heme biosynthesis</keyword>
<keyword id="KW-0472">Membrane</keyword>
<keyword id="KW-1185">Reference proteome</keyword>
<keyword id="KW-0808">Transferase</keyword>
<keyword id="KW-0812">Transmembrane</keyword>
<keyword id="KW-1133">Transmembrane helix</keyword>
<protein>
    <recommendedName>
        <fullName evidence="1">Protoheme IX farnesyltransferase</fullName>
        <ecNumber evidence="1">2.5.1.141</ecNumber>
    </recommendedName>
    <alternativeName>
        <fullName evidence="1">Heme B farnesyltransferase</fullName>
    </alternativeName>
    <alternativeName>
        <fullName evidence="1">Heme O synthase</fullName>
    </alternativeName>
</protein>